<keyword id="KW-0131">Cell cycle</keyword>
<keyword id="KW-0132">Cell division</keyword>
<keyword id="KW-0997">Cell inner membrane</keyword>
<keyword id="KW-1003">Cell membrane</keyword>
<keyword id="KW-0133">Cell shape</keyword>
<keyword id="KW-0961">Cell wall biogenesis/degradation</keyword>
<keyword id="KW-0460">Magnesium</keyword>
<keyword id="KW-0472">Membrane</keyword>
<keyword id="KW-0479">Metal-binding</keyword>
<keyword id="KW-0573">Peptidoglycan synthesis</keyword>
<keyword id="KW-1185">Reference proteome</keyword>
<keyword id="KW-0808">Transferase</keyword>
<keyword id="KW-0812">Transmembrane</keyword>
<keyword id="KW-1133">Transmembrane helix</keyword>
<protein>
    <recommendedName>
        <fullName evidence="1">Phospho-N-acetylmuramoyl-pentapeptide-transferase</fullName>
        <ecNumber evidence="1">2.7.8.13</ecNumber>
    </recommendedName>
    <alternativeName>
        <fullName evidence="1">UDP-MurNAc-pentapeptide phosphotransferase</fullName>
    </alternativeName>
</protein>
<feature type="chain" id="PRO_0000108794" description="Phospho-N-acetylmuramoyl-pentapeptide-transferase">
    <location>
        <begin position="1"/>
        <end position="367"/>
    </location>
</feature>
<feature type="transmembrane region" description="Helical" evidence="1">
    <location>
        <begin position="34"/>
        <end position="54"/>
    </location>
</feature>
<feature type="transmembrane region" description="Helical" evidence="1">
    <location>
        <begin position="78"/>
        <end position="98"/>
    </location>
</feature>
<feature type="transmembrane region" description="Helical" evidence="1">
    <location>
        <begin position="101"/>
        <end position="121"/>
    </location>
</feature>
<feature type="transmembrane region" description="Helical" evidence="1">
    <location>
        <begin position="135"/>
        <end position="155"/>
    </location>
</feature>
<feature type="transmembrane region" description="Helical" evidence="1">
    <location>
        <begin position="175"/>
        <end position="195"/>
    </location>
</feature>
<feature type="transmembrane region" description="Helical" evidence="1">
    <location>
        <begin position="206"/>
        <end position="226"/>
    </location>
</feature>
<feature type="transmembrane region" description="Helical" evidence="1">
    <location>
        <begin position="246"/>
        <end position="266"/>
    </location>
</feature>
<feature type="transmembrane region" description="Helical" evidence="1">
    <location>
        <begin position="270"/>
        <end position="290"/>
    </location>
</feature>
<feature type="transmembrane region" description="Helical" evidence="1">
    <location>
        <begin position="295"/>
        <end position="315"/>
    </location>
</feature>
<feature type="transmembrane region" description="Helical" evidence="1">
    <location>
        <begin position="344"/>
        <end position="364"/>
    </location>
</feature>
<organism>
    <name type="scientific">Bradyrhizobium diazoefficiens (strain JCM 10833 / BCRC 13528 / IAM 13628 / NBRC 14792 / USDA 110)</name>
    <dbReference type="NCBI Taxonomy" id="224911"/>
    <lineage>
        <taxon>Bacteria</taxon>
        <taxon>Pseudomonadati</taxon>
        <taxon>Pseudomonadota</taxon>
        <taxon>Alphaproteobacteria</taxon>
        <taxon>Hyphomicrobiales</taxon>
        <taxon>Nitrobacteraceae</taxon>
        <taxon>Bradyrhizobium</taxon>
    </lineage>
</organism>
<name>MRAY_BRADU</name>
<sequence>MFYWLIELSNTFPGFGAFRTFLNVFRYITFRTGGAVVTGALFVFLFGPWIIDHLRIRQGKGQPIRTDGPQSHLAKKGTPTMGGLMILSGLTVGTVLWANPLNPYVWIVLAVTLGFGFVGFYDDYLKVTKQTTTGFGSKLRLLIEAAIALVACYALVRLNRDPASTALTIPFLKDTVLHFGWFFVVFGAFVIVGAGNAVNLTDGLDGLAIVPVMIATASFAMIAYLAGNAVFADYLQIKYVAGTGELAVLCGALLGAGLGFLWFNAPPASIFMGDTGSLALGGMLGAIAVAVKHEIVLAVIGGLFVLEAVSVIVQVVSFKLTGKRIFRMAPIHHHFEQLGWTEPQIVIRFWIISVMLALAGLSTLKLR</sequence>
<reference key="1">
    <citation type="journal article" date="2002" name="DNA Res.">
        <title>Complete genomic sequence of nitrogen-fixing symbiotic bacterium Bradyrhizobium japonicum USDA110.</title>
        <authorList>
            <person name="Kaneko T."/>
            <person name="Nakamura Y."/>
            <person name="Sato S."/>
            <person name="Minamisawa K."/>
            <person name="Uchiumi T."/>
            <person name="Sasamoto S."/>
            <person name="Watanabe A."/>
            <person name="Idesawa K."/>
            <person name="Iriguchi M."/>
            <person name="Kawashima K."/>
            <person name="Kohara M."/>
            <person name="Matsumoto M."/>
            <person name="Shimpo S."/>
            <person name="Tsuruoka H."/>
            <person name="Wada T."/>
            <person name="Yamada M."/>
            <person name="Tabata S."/>
        </authorList>
    </citation>
    <scope>NUCLEOTIDE SEQUENCE [LARGE SCALE GENOMIC DNA]</scope>
    <source>
        <strain>JCM 10833 / BCRC 13528 / IAM 13628 / NBRC 14792 / USDA 110</strain>
    </source>
</reference>
<gene>
    <name evidence="1" type="primary">mraY</name>
    <name type="ordered locus">bll6605</name>
</gene>
<accession>Q89FU4</accession>
<evidence type="ECO:0000255" key="1">
    <source>
        <dbReference type="HAMAP-Rule" id="MF_00038"/>
    </source>
</evidence>
<dbReference type="EC" id="2.7.8.13" evidence="1"/>
<dbReference type="EMBL" id="BA000040">
    <property type="protein sequence ID" value="BAC51870.1"/>
    <property type="molecule type" value="Genomic_DNA"/>
</dbReference>
<dbReference type="RefSeq" id="NP_773245.1">
    <property type="nucleotide sequence ID" value="NC_004463.1"/>
</dbReference>
<dbReference type="RefSeq" id="WP_011089345.1">
    <property type="nucleotide sequence ID" value="NZ_CP011360.1"/>
</dbReference>
<dbReference type="SMR" id="Q89FU4"/>
<dbReference type="FunCoup" id="Q89FU4">
    <property type="interactions" value="510"/>
</dbReference>
<dbReference type="STRING" id="224911.AAV28_30605"/>
<dbReference type="EnsemblBacteria" id="BAC51870">
    <property type="protein sequence ID" value="BAC51870"/>
    <property type="gene ID" value="BAC51870"/>
</dbReference>
<dbReference type="GeneID" id="46493577"/>
<dbReference type="KEGG" id="bja:bll6605"/>
<dbReference type="PATRIC" id="fig|224911.44.peg.6617"/>
<dbReference type="eggNOG" id="COG0472">
    <property type="taxonomic scope" value="Bacteria"/>
</dbReference>
<dbReference type="HOGENOM" id="CLU_023982_0_0_5"/>
<dbReference type="InParanoid" id="Q89FU4"/>
<dbReference type="OrthoDB" id="9805475at2"/>
<dbReference type="PhylomeDB" id="Q89FU4"/>
<dbReference type="UniPathway" id="UPA00219"/>
<dbReference type="Proteomes" id="UP000002526">
    <property type="component" value="Chromosome"/>
</dbReference>
<dbReference type="GO" id="GO:0005886">
    <property type="term" value="C:plasma membrane"/>
    <property type="evidence" value="ECO:0000318"/>
    <property type="project" value="GO_Central"/>
</dbReference>
<dbReference type="GO" id="GO:0046872">
    <property type="term" value="F:metal ion binding"/>
    <property type="evidence" value="ECO:0007669"/>
    <property type="project" value="UniProtKB-KW"/>
</dbReference>
<dbReference type="GO" id="GO:0008963">
    <property type="term" value="F:phospho-N-acetylmuramoyl-pentapeptide-transferase activity"/>
    <property type="evidence" value="ECO:0000318"/>
    <property type="project" value="GO_Central"/>
</dbReference>
<dbReference type="GO" id="GO:0051992">
    <property type="term" value="F:UDP-N-acetylmuramoyl-L-alanyl-D-glutamyl-meso-2,6-diaminopimelyl-D-alanyl-D-alanine:undecaprenyl-phosphate transferase activity"/>
    <property type="evidence" value="ECO:0007669"/>
    <property type="project" value="RHEA"/>
</dbReference>
<dbReference type="GO" id="GO:0051301">
    <property type="term" value="P:cell division"/>
    <property type="evidence" value="ECO:0007669"/>
    <property type="project" value="UniProtKB-KW"/>
</dbReference>
<dbReference type="GO" id="GO:0044038">
    <property type="term" value="P:cell wall macromolecule biosynthetic process"/>
    <property type="evidence" value="ECO:0000318"/>
    <property type="project" value="GO_Central"/>
</dbReference>
<dbReference type="GO" id="GO:0071555">
    <property type="term" value="P:cell wall organization"/>
    <property type="evidence" value="ECO:0000318"/>
    <property type="project" value="GO_Central"/>
</dbReference>
<dbReference type="GO" id="GO:0009252">
    <property type="term" value="P:peptidoglycan biosynthetic process"/>
    <property type="evidence" value="ECO:0007669"/>
    <property type="project" value="UniProtKB-UniRule"/>
</dbReference>
<dbReference type="GO" id="GO:0008360">
    <property type="term" value="P:regulation of cell shape"/>
    <property type="evidence" value="ECO:0007669"/>
    <property type="project" value="UniProtKB-KW"/>
</dbReference>
<dbReference type="CDD" id="cd06852">
    <property type="entry name" value="GT_MraY"/>
    <property type="match status" value="1"/>
</dbReference>
<dbReference type="HAMAP" id="MF_00038">
    <property type="entry name" value="MraY"/>
    <property type="match status" value="1"/>
</dbReference>
<dbReference type="InterPro" id="IPR000715">
    <property type="entry name" value="Glycosyl_transferase_4"/>
</dbReference>
<dbReference type="InterPro" id="IPR003524">
    <property type="entry name" value="PNAcMuramoyl-5peptid_Trfase"/>
</dbReference>
<dbReference type="InterPro" id="IPR018480">
    <property type="entry name" value="PNAcMuramoyl-5peptid_Trfase_CS"/>
</dbReference>
<dbReference type="NCBIfam" id="TIGR00445">
    <property type="entry name" value="mraY"/>
    <property type="match status" value="1"/>
</dbReference>
<dbReference type="PANTHER" id="PTHR22926">
    <property type="entry name" value="PHOSPHO-N-ACETYLMURAMOYL-PENTAPEPTIDE-TRANSFERASE"/>
    <property type="match status" value="1"/>
</dbReference>
<dbReference type="PANTHER" id="PTHR22926:SF5">
    <property type="entry name" value="PHOSPHO-N-ACETYLMURAMOYL-PENTAPEPTIDE-TRANSFERASE HOMOLOG"/>
    <property type="match status" value="1"/>
</dbReference>
<dbReference type="Pfam" id="PF00953">
    <property type="entry name" value="Glycos_transf_4"/>
    <property type="match status" value="1"/>
</dbReference>
<dbReference type="Pfam" id="PF10555">
    <property type="entry name" value="MraY_sig1"/>
    <property type="match status" value="1"/>
</dbReference>
<dbReference type="PROSITE" id="PS01347">
    <property type="entry name" value="MRAY_1"/>
    <property type="match status" value="1"/>
</dbReference>
<dbReference type="PROSITE" id="PS01348">
    <property type="entry name" value="MRAY_2"/>
    <property type="match status" value="1"/>
</dbReference>
<proteinExistence type="inferred from homology"/>
<comment type="function">
    <text evidence="1">Catalyzes the initial step of the lipid cycle reactions in the biosynthesis of the cell wall peptidoglycan: transfers peptidoglycan precursor phospho-MurNAc-pentapeptide from UDP-MurNAc-pentapeptide onto the lipid carrier undecaprenyl phosphate, yielding undecaprenyl-pyrophosphoryl-MurNAc-pentapeptide, known as lipid I.</text>
</comment>
<comment type="catalytic activity">
    <reaction evidence="1">
        <text>UDP-N-acetyl-alpha-D-muramoyl-L-alanyl-gamma-D-glutamyl-meso-2,6-diaminopimeloyl-D-alanyl-D-alanine + di-trans,octa-cis-undecaprenyl phosphate = di-trans,octa-cis-undecaprenyl diphospho-N-acetyl-alpha-D-muramoyl-L-alanyl-D-glutamyl-meso-2,6-diaminopimeloyl-D-alanyl-D-alanine + UMP</text>
        <dbReference type="Rhea" id="RHEA:28386"/>
        <dbReference type="ChEBI" id="CHEBI:57865"/>
        <dbReference type="ChEBI" id="CHEBI:60392"/>
        <dbReference type="ChEBI" id="CHEBI:61386"/>
        <dbReference type="ChEBI" id="CHEBI:61387"/>
        <dbReference type="EC" id="2.7.8.13"/>
    </reaction>
</comment>
<comment type="cofactor">
    <cofactor evidence="1">
        <name>Mg(2+)</name>
        <dbReference type="ChEBI" id="CHEBI:18420"/>
    </cofactor>
</comment>
<comment type="pathway">
    <text evidence="1">Cell wall biogenesis; peptidoglycan biosynthesis.</text>
</comment>
<comment type="subcellular location">
    <subcellularLocation>
        <location evidence="1">Cell inner membrane</location>
        <topology evidence="1">Multi-pass membrane protein</topology>
    </subcellularLocation>
</comment>
<comment type="similarity">
    <text evidence="1">Belongs to the glycosyltransferase 4 family. MraY subfamily.</text>
</comment>